<organism>
    <name type="scientific">Schizosaccharomyces pombe (strain 972 / ATCC 24843)</name>
    <name type="common">Fission yeast</name>
    <dbReference type="NCBI Taxonomy" id="284812"/>
    <lineage>
        <taxon>Eukaryota</taxon>
        <taxon>Fungi</taxon>
        <taxon>Dikarya</taxon>
        <taxon>Ascomycota</taxon>
        <taxon>Taphrinomycotina</taxon>
        <taxon>Schizosaccharomycetes</taxon>
        <taxon>Schizosaccharomycetales</taxon>
        <taxon>Schizosaccharomycetaceae</taxon>
        <taxon>Schizosaccharomyces</taxon>
    </lineage>
</organism>
<accession>O14147</accession>
<keyword id="KW-0067">ATP-binding</keyword>
<keyword id="KW-0131">Cell cycle</keyword>
<keyword id="KW-0963">Cytoplasm</keyword>
<keyword id="KW-0238">DNA-binding</keyword>
<keyword id="KW-0347">Helicase</keyword>
<keyword id="KW-0378">Hydrolase</keyword>
<keyword id="KW-0408">Iron</keyword>
<keyword id="KW-0411">Iron-sulfur</keyword>
<keyword id="KW-0413">Isomerase</keyword>
<keyword id="KW-0479">Metal-binding</keyword>
<keyword id="KW-0547">Nucleotide-binding</keyword>
<keyword id="KW-0539">Nucleus</keyword>
<keyword id="KW-1185">Reference proteome</keyword>
<feature type="chain" id="PRO_0000351016" description="ATP-dependent DNA helicase chl1">
    <location>
        <begin position="1"/>
        <end position="844"/>
    </location>
</feature>
<feature type="domain" description="Helicase ATP-binding" evidence="4">
    <location>
        <begin position="9"/>
        <end position="418"/>
    </location>
</feature>
<feature type="region of interest" description="Disordered" evidence="5">
    <location>
        <begin position="118"/>
        <end position="161"/>
    </location>
</feature>
<feature type="short sequence motif" description="DEAH box">
    <location>
        <begin position="362"/>
        <end position="365"/>
    </location>
</feature>
<feature type="compositionally biased region" description="Polar residues" evidence="5">
    <location>
        <begin position="124"/>
        <end position="134"/>
    </location>
</feature>
<feature type="compositionally biased region" description="Low complexity" evidence="5">
    <location>
        <begin position="149"/>
        <end position="160"/>
    </location>
</feature>
<feature type="binding site" evidence="4">
    <location>
        <begin position="44"/>
        <end position="51"/>
    </location>
    <ligand>
        <name>ATP</name>
        <dbReference type="ChEBI" id="CHEBI:30616"/>
    </ligand>
</feature>
<feature type="binding site" evidence="1">
    <location>
        <position position="255"/>
    </location>
    <ligand>
        <name>[4Fe-4S] cluster</name>
        <dbReference type="ChEBI" id="CHEBI:49883"/>
    </ligand>
</feature>
<feature type="binding site" evidence="1">
    <location>
        <position position="273"/>
    </location>
    <ligand>
        <name>[4Fe-4S] cluster</name>
        <dbReference type="ChEBI" id="CHEBI:49883"/>
    </ligand>
</feature>
<feature type="binding site" evidence="1">
    <location>
        <position position="283"/>
    </location>
    <ligand>
        <name>[4Fe-4S] cluster</name>
        <dbReference type="ChEBI" id="CHEBI:49883"/>
    </ligand>
</feature>
<feature type="binding site" evidence="1">
    <location>
        <position position="319"/>
    </location>
    <ligand>
        <name>[4Fe-4S] cluster</name>
        <dbReference type="ChEBI" id="CHEBI:49883"/>
    </ligand>
</feature>
<proteinExistence type="inferred from homology"/>
<protein>
    <recommendedName>
        <fullName evidence="2">ATP-dependent DNA helicase chl1</fullName>
        <ecNumber evidence="3">5.6.2.3</ecNumber>
    </recommendedName>
    <alternativeName>
        <fullName evidence="2">Chromosome loss protein 1</fullName>
    </alternativeName>
    <alternativeName>
        <fullName evidence="7">DNA 5'-3' helicase chl1</fullName>
    </alternativeName>
</protein>
<dbReference type="EC" id="5.6.2.3" evidence="3"/>
<dbReference type="EMBL" id="CU329670">
    <property type="protein sequence ID" value="CAB16287.1"/>
    <property type="molecule type" value="Genomic_DNA"/>
</dbReference>
<dbReference type="PIR" id="T38730">
    <property type="entry name" value="T38730"/>
</dbReference>
<dbReference type="RefSeq" id="NP_594977.1">
    <property type="nucleotide sequence ID" value="NM_001020408.2"/>
</dbReference>
<dbReference type="SMR" id="O14147"/>
<dbReference type="BioGRID" id="279550">
    <property type="interactions" value="27"/>
</dbReference>
<dbReference type="FunCoup" id="O14147">
    <property type="interactions" value="848"/>
</dbReference>
<dbReference type="STRING" id="284812.O14147"/>
<dbReference type="PaxDb" id="4896-SPAC3G6.11.1"/>
<dbReference type="EnsemblFungi" id="SPAC3G6.11.1">
    <property type="protein sequence ID" value="SPAC3G6.11.1:pep"/>
    <property type="gene ID" value="SPAC3G6.11"/>
</dbReference>
<dbReference type="GeneID" id="2543118"/>
<dbReference type="KEGG" id="spo:2543118"/>
<dbReference type="PomBase" id="SPAC3G6.11">
    <property type="gene designation" value="chl1"/>
</dbReference>
<dbReference type="VEuPathDB" id="FungiDB:SPAC3G6.11"/>
<dbReference type="eggNOG" id="KOG1133">
    <property type="taxonomic scope" value="Eukaryota"/>
</dbReference>
<dbReference type="HOGENOM" id="CLU_006515_2_0_1"/>
<dbReference type="InParanoid" id="O14147"/>
<dbReference type="OMA" id="QTHQFRD"/>
<dbReference type="PhylomeDB" id="O14147"/>
<dbReference type="PRO" id="PR:O14147"/>
<dbReference type="Proteomes" id="UP000002485">
    <property type="component" value="Chromosome I"/>
</dbReference>
<dbReference type="GO" id="GO:0000785">
    <property type="term" value="C:chromatin"/>
    <property type="evidence" value="ECO:0000305"/>
    <property type="project" value="PomBase"/>
</dbReference>
<dbReference type="GO" id="GO:0005829">
    <property type="term" value="C:cytosol"/>
    <property type="evidence" value="ECO:0007005"/>
    <property type="project" value="PomBase"/>
</dbReference>
<dbReference type="GO" id="GO:0005634">
    <property type="term" value="C:nucleus"/>
    <property type="evidence" value="ECO:0007005"/>
    <property type="project" value="PomBase"/>
</dbReference>
<dbReference type="GO" id="GO:0035861">
    <property type="term" value="C:site of double-strand break"/>
    <property type="evidence" value="ECO:0000314"/>
    <property type="project" value="PomBase"/>
</dbReference>
<dbReference type="GO" id="GO:0005524">
    <property type="term" value="F:ATP binding"/>
    <property type="evidence" value="ECO:0007669"/>
    <property type="project" value="UniProtKB-KW"/>
</dbReference>
<dbReference type="GO" id="GO:0016887">
    <property type="term" value="F:ATP hydrolysis activity"/>
    <property type="evidence" value="ECO:0007669"/>
    <property type="project" value="RHEA"/>
</dbReference>
<dbReference type="GO" id="GO:0003677">
    <property type="term" value="F:DNA binding"/>
    <property type="evidence" value="ECO:0007669"/>
    <property type="project" value="UniProtKB-KW"/>
</dbReference>
<dbReference type="GO" id="GO:0003678">
    <property type="term" value="F:DNA helicase activity"/>
    <property type="evidence" value="ECO:0000318"/>
    <property type="project" value="GO_Central"/>
</dbReference>
<dbReference type="GO" id="GO:0051536">
    <property type="term" value="F:iron-sulfur cluster binding"/>
    <property type="evidence" value="ECO:0007669"/>
    <property type="project" value="UniProtKB-KW"/>
</dbReference>
<dbReference type="GO" id="GO:0046872">
    <property type="term" value="F:metal ion binding"/>
    <property type="evidence" value="ECO:0007669"/>
    <property type="project" value="UniProtKB-KW"/>
</dbReference>
<dbReference type="GO" id="GO:0045005">
    <property type="term" value="P:DNA-templated DNA replication maintenance of fidelity"/>
    <property type="evidence" value="ECO:0000316"/>
    <property type="project" value="PomBase"/>
</dbReference>
<dbReference type="GO" id="GO:0034085">
    <property type="term" value="P:establishment of sister chromatid cohesion"/>
    <property type="evidence" value="ECO:0000318"/>
    <property type="project" value="GO_Central"/>
</dbReference>
<dbReference type="GO" id="GO:0036297">
    <property type="term" value="P:interstrand cross-link repair"/>
    <property type="evidence" value="ECO:0000266"/>
    <property type="project" value="PomBase"/>
</dbReference>
<dbReference type="CDD" id="cd18788">
    <property type="entry name" value="SF2_C_XPD"/>
    <property type="match status" value="1"/>
</dbReference>
<dbReference type="FunFam" id="3.40.50.300:FF:001372">
    <property type="entry name" value="ATP-dependent DNA helicase chl1"/>
    <property type="match status" value="1"/>
</dbReference>
<dbReference type="Gene3D" id="3.40.50.300">
    <property type="entry name" value="P-loop containing nucleotide triphosphate hydrolases"/>
    <property type="match status" value="3"/>
</dbReference>
<dbReference type="InterPro" id="IPR006555">
    <property type="entry name" value="ATP-dep_Helicase_C"/>
</dbReference>
<dbReference type="InterPro" id="IPR045028">
    <property type="entry name" value="DinG/Rad3-like"/>
</dbReference>
<dbReference type="InterPro" id="IPR014013">
    <property type="entry name" value="Helic_SF1/SF2_ATP-bd_DinG/Rad3"/>
</dbReference>
<dbReference type="InterPro" id="IPR006554">
    <property type="entry name" value="Helicase-like_DEXD_c2"/>
</dbReference>
<dbReference type="InterPro" id="IPR027417">
    <property type="entry name" value="P-loop_NTPase"/>
</dbReference>
<dbReference type="InterPro" id="IPR010614">
    <property type="entry name" value="RAD3-like_helicase_DEAD"/>
</dbReference>
<dbReference type="InterPro" id="IPR013020">
    <property type="entry name" value="Rad3/Chl1-like"/>
</dbReference>
<dbReference type="NCBIfam" id="TIGR00604">
    <property type="entry name" value="rad3"/>
    <property type="match status" value="1"/>
</dbReference>
<dbReference type="PANTHER" id="PTHR11472:SF41">
    <property type="entry name" value="ATP-DEPENDENT DNA HELICASE DDX11-RELATED"/>
    <property type="match status" value="1"/>
</dbReference>
<dbReference type="PANTHER" id="PTHR11472">
    <property type="entry name" value="DNA REPAIR DEAD HELICASE RAD3/XP-D SUBFAMILY MEMBER"/>
    <property type="match status" value="1"/>
</dbReference>
<dbReference type="Pfam" id="PF06733">
    <property type="entry name" value="DEAD_2"/>
    <property type="match status" value="1"/>
</dbReference>
<dbReference type="Pfam" id="PF13307">
    <property type="entry name" value="Helicase_C_2"/>
    <property type="match status" value="1"/>
</dbReference>
<dbReference type="SMART" id="SM00488">
    <property type="entry name" value="DEXDc2"/>
    <property type="match status" value="1"/>
</dbReference>
<dbReference type="SMART" id="SM00491">
    <property type="entry name" value="HELICc2"/>
    <property type="match status" value="1"/>
</dbReference>
<dbReference type="SUPFAM" id="SSF52540">
    <property type="entry name" value="P-loop containing nucleoside triphosphate hydrolases"/>
    <property type="match status" value="1"/>
</dbReference>
<dbReference type="PROSITE" id="PS51193">
    <property type="entry name" value="HELICASE_ATP_BIND_2"/>
    <property type="match status" value="1"/>
</dbReference>
<reference key="1">
    <citation type="journal article" date="2002" name="Nature">
        <title>The genome sequence of Schizosaccharomyces pombe.</title>
        <authorList>
            <person name="Wood V."/>
            <person name="Gwilliam R."/>
            <person name="Rajandream M.A."/>
            <person name="Lyne M.H."/>
            <person name="Lyne R."/>
            <person name="Stewart A."/>
            <person name="Sgouros J.G."/>
            <person name="Peat N."/>
            <person name="Hayles J."/>
            <person name="Baker S.G."/>
            <person name="Basham D."/>
            <person name="Bowman S."/>
            <person name="Brooks K."/>
            <person name="Brown D."/>
            <person name="Brown S."/>
            <person name="Chillingworth T."/>
            <person name="Churcher C.M."/>
            <person name="Collins M."/>
            <person name="Connor R."/>
            <person name="Cronin A."/>
            <person name="Davis P."/>
            <person name="Feltwell T."/>
            <person name="Fraser A."/>
            <person name="Gentles S."/>
            <person name="Goble A."/>
            <person name="Hamlin N."/>
            <person name="Harris D.E."/>
            <person name="Hidalgo J."/>
            <person name="Hodgson G."/>
            <person name="Holroyd S."/>
            <person name="Hornsby T."/>
            <person name="Howarth S."/>
            <person name="Huckle E.J."/>
            <person name="Hunt S."/>
            <person name="Jagels K."/>
            <person name="James K.D."/>
            <person name="Jones L."/>
            <person name="Jones M."/>
            <person name="Leather S."/>
            <person name="McDonald S."/>
            <person name="McLean J."/>
            <person name="Mooney P."/>
            <person name="Moule S."/>
            <person name="Mungall K.L."/>
            <person name="Murphy L.D."/>
            <person name="Niblett D."/>
            <person name="Odell C."/>
            <person name="Oliver K."/>
            <person name="O'Neil S."/>
            <person name="Pearson D."/>
            <person name="Quail M.A."/>
            <person name="Rabbinowitsch E."/>
            <person name="Rutherford K.M."/>
            <person name="Rutter S."/>
            <person name="Saunders D."/>
            <person name="Seeger K."/>
            <person name="Sharp S."/>
            <person name="Skelton J."/>
            <person name="Simmonds M.N."/>
            <person name="Squares R."/>
            <person name="Squares S."/>
            <person name="Stevens K."/>
            <person name="Taylor K."/>
            <person name="Taylor R.G."/>
            <person name="Tivey A."/>
            <person name="Walsh S.V."/>
            <person name="Warren T."/>
            <person name="Whitehead S."/>
            <person name="Woodward J.R."/>
            <person name="Volckaert G."/>
            <person name="Aert R."/>
            <person name="Robben J."/>
            <person name="Grymonprez B."/>
            <person name="Weltjens I."/>
            <person name="Vanstreels E."/>
            <person name="Rieger M."/>
            <person name="Schaefer M."/>
            <person name="Mueller-Auer S."/>
            <person name="Gabel C."/>
            <person name="Fuchs M."/>
            <person name="Duesterhoeft A."/>
            <person name="Fritzc C."/>
            <person name="Holzer E."/>
            <person name="Moestl D."/>
            <person name="Hilbert H."/>
            <person name="Borzym K."/>
            <person name="Langer I."/>
            <person name="Beck A."/>
            <person name="Lehrach H."/>
            <person name="Reinhardt R."/>
            <person name="Pohl T.M."/>
            <person name="Eger P."/>
            <person name="Zimmermann W."/>
            <person name="Wedler H."/>
            <person name="Wambutt R."/>
            <person name="Purnelle B."/>
            <person name="Goffeau A."/>
            <person name="Cadieu E."/>
            <person name="Dreano S."/>
            <person name="Gloux S."/>
            <person name="Lelaure V."/>
            <person name="Mottier S."/>
            <person name="Galibert F."/>
            <person name="Aves S.J."/>
            <person name="Xiang Z."/>
            <person name="Hunt C."/>
            <person name="Moore K."/>
            <person name="Hurst S.M."/>
            <person name="Lucas M."/>
            <person name="Rochet M."/>
            <person name="Gaillardin C."/>
            <person name="Tallada V.A."/>
            <person name="Garzon A."/>
            <person name="Thode G."/>
            <person name="Daga R.R."/>
            <person name="Cruzado L."/>
            <person name="Jimenez J."/>
            <person name="Sanchez M."/>
            <person name="del Rey F."/>
            <person name="Benito J."/>
            <person name="Dominguez A."/>
            <person name="Revuelta J.L."/>
            <person name="Moreno S."/>
            <person name="Armstrong J."/>
            <person name="Forsburg S.L."/>
            <person name="Cerutti L."/>
            <person name="Lowe T."/>
            <person name="McCombie W.R."/>
            <person name="Paulsen I."/>
            <person name="Potashkin J."/>
            <person name="Shpakovski G.V."/>
            <person name="Ussery D."/>
            <person name="Barrell B.G."/>
            <person name="Nurse P."/>
        </authorList>
    </citation>
    <scope>NUCLEOTIDE SEQUENCE [LARGE SCALE GENOMIC DNA]</scope>
    <source>
        <strain>972 / ATCC 24843</strain>
    </source>
</reference>
<reference key="2">
    <citation type="journal article" date="2006" name="Nat. Biotechnol.">
        <title>ORFeome cloning and global analysis of protein localization in the fission yeast Schizosaccharomyces pombe.</title>
        <authorList>
            <person name="Matsuyama A."/>
            <person name="Arai R."/>
            <person name="Yashiroda Y."/>
            <person name="Shirai A."/>
            <person name="Kamata A."/>
            <person name="Sekido S."/>
            <person name="Kobayashi Y."/>
            <person name="Hashimoto A."/>
            <person name="Hamamoto M."/>
            <person name="Hiraoka Y."/>
            <person name="Horinouchi S."/>
            <person name="Yoshida M."/>
        </authorList>
    </citation>
    <scope>SUBCELLULAR LOCATION [LARGE SCALE ANALYSIS]</scope>
</reference>
<evidence type="ECO:0000250" key="1">
    <source>
        <dbReference type="UniProtKB" id="P18074"/>
    </source>
</evidence>
<evidence type="ECO:0000250" key="2">
    <source>
        <dbReference type="UniProtKB" id="P22516"/>
    </source>
</evidence>
<evidence type="ECO:0000250" key="3">
    <source>
        <dbReference type="UniProtKB" id="Q96FC9"/>
    </source>
</evidence>
<evidence type="ECO:0000255" key="4">
    <source>
        <dbReference type="PROSITE-ProRule" id="PRU00541"/>
    </source>
</evidence>
<evidence type="ECO:0000256" key="5">
    <source>
        <dbReference type="SAM" id="MobiDB-lite"/>
    </source>
</evidence>
<evidence type="ECO:0000269" key="6">
    <source>
    </source>
</evidence>
<evidence type="ECO:0000305" key="7"/>
<sequence>MCHSKEVKFKTNFHHPYTPYDIQLEFMRSLYSSISDGKIGIFESPTGTGKSLSLICASLTWLDEHGGVLLEDNEKSNDNKSNTSSKIPDWVLEQDLKIQKDLVKETHARLEQRLEEIRKRNQSRKNQMSNNSTTYHRETKRRNINAEASTSDNCNNSNTSVDPMDEYLVTAEYTMPSTSEQSEDLFNNGYSSKVSELLRKLSPDNEKPPIVQKIYFTSRTHSQLQQLVQEIKKLNNQTFSTPIRVVSLASRKNLCINNEVRKLRPTSALNEKCIELQGSAHKCPFLQDNTQLWDFRDEALAEIMDIEELVELGQRLKVCPYYGTREAVDSAQIVTLPYPLLLQESARNALNLTLKDNICIIDEAHNLIDAICSMHSSSISFRQVCIAETQLQQYFLRFEKRLNGNNRMHIKQLIKVVYNLKSFFLNCLETNTNSKVINVDSLLVSNGADQINLHHLSEYLNVSKLARKVDGYTKYMHSLGTQELESLNDLRSERFSNGNGYEEDPYTPVLMQLESFLLNIANPAPEGKLFYEKQTGDNPYLKYLLLDPSKHVEILTEQCRSVNLAGGTMSPIDDFITLLFSDEQSRILPFSCDHIVPPENITTILVSQGPAGVPFEFTHKRKDDENLLKDLGRTFQNFISIIPDGVVVFFPSFAFLQQAVKVWEMNGITNRLNAKKPLFIESKDFGDNPLDTFEHYKQSVDAGLSGMLFSVIGGRLSEGINFSDKLGRAVMVVGMPFPNSQDVEWQAKVSYVEEKAKEKGINAKQASQEFYENTCMRAVNQSIGRAIRHRDDYASIILLDSRYNRSSIQRKLPNWLSKNIHSSPNFGPAIRQLATFFRAKKMCD</sequence>
<name>CHL1_SCHPO</name>
<comment type="function">
    <text evidence="2">ATP-dependent DNA helicase important for chromosome transmission and normal cell cycle progression in G(2)/M (By similarity). May have a role in changing DNA topology to allow the loading of proteins involved in maintaining sister chromatid cohesion in the vicinity of the centromeres (By similarity). Has a specific role in chromosome segregation during meiosis II (By similarity).</text>
</comment>
<comment type="catalytic activity">
    <reaction evidence="3">
        <text>Couples ATP hydrolysis with the unwinding of duplex DNA at the replication fork by translocating in the 5'-3' direction. This creates two antiparallel DNA single strands (ssDNA). The leading ssDNA polymer is the template for DNA polymerase III holoenzyme which synthesizes a continuous strand.</text>
        <dbReference type="EC" id="5.6.2.3"/>
    </reaction>
</comment>
<comment type="catalytic activity">
    <reaction evidence="3">
        <text>ATP + H2O = ADP + phosphate + H(+)</text>
        <dbReference type="Rhea" id="RHEA:13065"/>
        <dbReference type="ChEBI" id="CHEBI:15377"/>
        <dbReference type="ChEBI" id="CHEBI:15378"/>
        <dbReference type="ChEBI" id="CHEBI:30616"/>
        <dbReference type="ChEBI" id="CHEBI:43474"/>
        <dbReference type="ChEBI" id="CHEBI:456216"/>
        <dbReference type="EC" id="5.6.2.3"/>
    </reaction>
</comment>
<comment type="cofactor">
    <cofactor evidence="1">
        <name>[4Fe-4S] cluster</name>
        <dbReference type="ChEBI" id="CHEBI:49883"/>
    </cofactor>
    <text evidence="1">Binds 1 [4Fe-4S] cluster.</text>
</comment>
<comment type="subcellular location">
    <subcellularLocation>
        <location evidence="6">Cytoplasm</location>
    </subcellularLocation>
    <subcellularLocation>
        <location evidence="6">Nucleus</location>
    </subcellularLocation>
</comment>
<comment type="similarity">
    <text evidence="7">Belongs to the DEAD box helicase family. DEAH subfamily. DDX11/CHL1 sub-subfamily.</text>
</comment>
<gene>
    <name type="primary">chl1</name>
    <name type="ORF">SPAC3G6.11</name>
</gene>